<sequence length="200" mass="22546">MSGFQQHTGLVVPLDAANVDTDAIIPKQFLQKVNRTGFGKHLFHDWRFLDDAGEKANPEFVMNQPRYQDASILLARENFGCGSSREHAPWALADYGIRVMIAPSFADIFYGNSINNQMVPVRLTEQEVDELFTYVHDTEGATITVDLEALSVTANGKTYHFEIDDFRRHCLLNGLDNIGLTLQHEAKIAEYEAKIPSFLK</sequence>
<proteinExistence type="inferred from homology"/>
<organism>
    <name type="scientific">Vibrio cholerae serotype O1 (strain ATCC 39541 / Classical Ogawa 395 / O395)</name>
    <dbReference type="NCBI Taxonomy" id="345073"/>
    <lineage>
        <taxon>Bacteria</taxon>
        <taxon>Pseudomonadati</taxon>
        <taxon>Pseudomonadota</taxon>
        <taxon>Gammaproteobacteria</taxon>
        <taxon>Vibrionales</taxon>
        <taxon>Vibrionaceae</taxon>
        <taxon>Vibrio</taxon>
    </lineage>
</organism>
<protein>
    <recommendedName>
        <fullName evidence="1">3-isopropylmalate dehydratase small subunit</fullName>
        <ecNumber evidence="1">4.2.1.33</ecNumber>
    </recommendedName>
    <alternativeName>
        <fullName evidence="1">Alpha-IPM isomerase</fullName>
        <shortName evidence="1">IPMI</shortName>
    </alternativeName>
    <alternativeName>
        <fullName evidence="1">Isopropylmalate isomerase</fullName>
    </alternativeName>
</protein>
<name>LEUD_VIBC3</name>
<keyword id="KW-0028">Amino-acid biosynthesis</keyword>
<keyword id="KW-0100">Branched-chain amino acid biosynthesis</keyword>
<keyword id="KW-0432">Leucine biosynthesis</keyword>
<keyword id="KW-0456">Lyase</keyword>
<feature type="chain" id="PRO_1000072961" description="3-isopropylmalate dehydratase small subunit">
    <location>
        <begin position="1"/>
        <end position="200"/>
    </location>
</feature>
<evidence type="ECO:0000255" key="1">
    <source>
        <dbReference type="HAMAP-Rule" id="MF_01031"/>
    </source>
</evidence>
<accession>A5F5E3</accession>
<accession>C3M4Y3</accession>
<gene>
    <name evidence="1" type="primary">leuD</name>
    <name type="ordered locus">VC0395_A2068</name>
    <name type="ordered locus">VC395_2607</name>
</gene>
<comment type="function">
    <text evidence="1">Catalyzes the isomerization between 2-isopropylmalate and 3-isopropylmalate, via the formation of 2-isopropylmaleate.</text>
</comment>
<comment type="catalytic activity">
    <reaction evidence="1">
        <text>(2R,3S)-3-isopropylmalate = (2S)-2-isopropylmalate</text>
        <dbReference type="Rhea" id="RHEA:32287"/>
        <dbReference type="ChEBI" id="CHEBI:1178"/>
        <dbReference type="ChEBI" id="CHEBI:35121"/>
        <dbReference type="EC" id="4.2.1.33"/>
    </reaction>
</comment>
<comment type="pathway">
    <text evidence="1">Amino-acid biosynthesis; L-leucine biosynthesis; L-leucine from 3-methyl-2-oxobutanoate: step 2/4.</text>
</comment>
<comment type="subunit">
    <text evidence="1">Heterodimer of LeuC and LeuD.</text>
</comment>
<comment type="similarity">
    <text evidence="1">Belongs to the LeuD family. LeuD type 1 subfamily.</text>
</comment>
<reference key="1">
    <citation type="submission" date="2007-03" db="EMBL/GenBank/DDBJ databases">
        <authorList>
            <person name="Heidelberg J."/>
        </authorList>
    </citation>
    <scope>NUCLEOTIDE SEQUENCE [LARGE SCALE GENOMIC DNA]</scope>
    <source>
        <strain>ATCC 39541 / Classical Ogawa 395 / O395</strain>
    </source>
</reference>
<reference key="2">
    <citation type="journal article" date="2008" name="PLoS ONE">
        <title>A recalibrated molecular clock and independent origins for the cholera pandemic clones.</title>
        <authorList>
            <person name="Feng L."/>
            <person name="Reeves P.R."/>
            <person name="Lan R."/>
            <person name="Ren Y."/>
            <person name="Gao C."/>
            <person name="Zhou Z."/>
            <person name="Ren Y."/>
            <person name="Cheng J."/>
            <person name="Wang W."/>
            <person name="Wang J."/>
            <person name="Qian W."/>
            <person name="Li D."/>
            <person name="Wang L."/>
        </authorList>
    </citation>
    <scope>NUCLEOTIDE SEQUENCE [LARGE SCALE GENOMIC DNA]</scope>
    <source>
        <strain>ATCC 39541 / Classical Ogawa 395 / O395</strain>
    </source>
</reference>
<dbReference type="EC" id="4.2.1.33" evidence="1"/>
<dbReference type="EMBL" id="CP000627">
    <property type="protein sequence ID" value="ABQ21870.1"/>
    <property type="molecule type" value="Genomic_DNA"/>
</dbReference>
<dbReference type="EMBL" id="CP001235">
    <property type="protein sequence ID" value="ACP10594.1"/>
    <property type="molecule type" value="Genomic_DNA"/>
</dbReference>
<dbReference type="RefSeq" id="WP_000012771.1">
    <property type="nucleotide sequence ID" value="NZ_JAACZH010000010.1"/>
</dbReference>
<dbReference type="SMR" id="A5F5E3"/>
<dbReference type="KEGG" id="vco:VC0395_A2068"/>
<dbReference type="KEGG" id="vcr:VC395_2607"/>
<dbReference type="PATRIC" id="fig|345073.21.peg.2510"/>
<dbReference type="eggNOG" id="COG0066">
    <property type="taxonomic scope" value="Bacteria"/>
</dbReference>
<dbReference type="HOGENOM" id="CLU_081378_0_3_6"/>
<dbReference type="OrthoDB" id="9777465at2"/>
<dbReference type="UniPathway" id="UPA00048">
    <property type="reaction ID" value="UER00071"/>
</dbReference>
<dbReference type="Proteomes" id="UP000000249">
    <property type="component" value="Chromosome 2"/>
</dbReference>
<dbReference type="GO" id="GO:0009316">
    <property type="term" value="C:3-isopropylmalate dehydratase complex"/>
    <property type="evidence" value="ECO:0007669"/>
    <property type="project" value="InterPro"/>
</dbReference>
<dbReference type="GO" id="GO:0003861">
    <property type="term" value="F:3-isopropylmalate dehydratase activity"/>
    <property type="evidence" value="ECO:0007669"/>
    <property type="project" value="UniProtKB-UniRule"/>
</dbReference>
<dbReference type="GO" id="GO:0009098">
    <property type="term" value="P:L-leucine biosynthetic process"/>
    <property type="evidence" value="ECO:0007669"/>
    <property type="project" value="UniProtKB-UniRule"/>
</dbReference>
<dbReference type="CDD" id="cd01577">
    <property type="entry name" value="IPMI_Swivel"/>
    <property type="match status" value="1"/>
</dbReference>
<dbReference type="FunFam" id="3.20.19.10:FF:000003">
    <property type="entry name" value="3-isopropylmalate dehydratase small subunit"/>
    <property type="match status" value="1"/>
</dbReference>
<dbReference type="Gene3D" id="3.20.19.10">
    <property type="entry name" value="Aconitase, domain 4"/>
    <property type="match status" value="1"/>
</dbReference>
<dbReference type="HAMAP" id="MF_01031">
    <property type="entry name" value="LeuD_type1"/>
    <property type="match status" value="1"/>
</dbReference>
<dbReference type="InterPro" id="IPR004431">
    <property type="entry name" value="3-IsopropMal_deHydase_ssu"/>
</dbReference>
<dbReference type="InterPro" id="IPR015928">
    <property type="entry name" value="Aconitase/3IPM_dehydase_swvl"/>
</dbReference>
<dbReference type="InterPro" id="IPR000573">
    <property type="entry name" value="AconitaseA/IPMdHydase_ssu_swvl"/>
</dbReference>
<dbReference type="InterPro" id="IPR033940">
    <property type="entry name" value="IPMI_Swivel"/>
</dbReference>
<dbReference type="InterPro" id="IPR050075">
    <property type="entry name" value="LeuD"/>
</dbReference>
<dbReference type="NCBIfam" id="TIGR00171">
    <property type="entry name" value="leuD"/>
    <property type="match status" value="1"/>
</dbReference>
<dbReference type="NCBIfam" id="NF002458">
    <property type="entry name" value="PRK01641.1"/>
    <property type="match status" value="1"/>
</dbReference>
<dbReference type="PANTHER" id="PTHR43345:SF5">
    <property type="entry name" value="3-ISOPROPYLMALATE DEHYDRATASE SMALL SUBUNIT"/>
    <property type="match status" value="1"/>
</dbReference>
<dbReference type="PANTHER" id="PTHR43345">
    <property type="entry name" value="3-ISOPROPYLMALATE DEHYDRATASE SMALL SUBUNIT 2-RELATED-RELATED"/>
    <property type="match status" value="1"/>
</dbReference>
<dbReference type="Pfam" id="PF00694">
    <property type="entry name" value="Aconitase_C"/>
    <property type="match status" value="1"/>
</dbReference>
<dbReference type="SUPFAM" id="SSF52016">
    <property type="entry name" value="LeuD/IlvD-like"/>
    <property type="match status" value="1"/>
</dbReference>